<comment type="function">
    <text evidence="1">May play a role in DNA repair. It seems to be involved in an RecBC-independent recombinational process of DNA repair. It may act with RecF and RecO.</text>
</comment>
<comment type="similarity">
    <text evidence="1">Belongs to the RecR family.</text>
</comment>
<accession>Q8UJ45</accession>
<organism>
    <name type="scientific">Agrobacterium fabrum (strain C58 / ATCC 33970)</name>
    <name type="common">Agrobacterium tumefaciens (strain C58)</name>
    <dbReference type="NCBI Taxonomy" id="176299"/>
    <lineage>
        <taxon>Bacteria</taxon>
        <taxon>Pseudomonadati</taxon>
        <taxon>Pseudomonadota</taxon>
        <taxon>Alphaproteobacteria</taxon>
        <taxon>Hyphomicrobiales</taxon>
        <taxon>Rhizobiaceae</taxon>
        <taxon>Rhizobium/Agrobacterium group</taxon>
        <taxon>Agrobacterium</taxon>
        <taxon>Agrobacterium tumefaciens complex</taxon>
    </lineage>
</organism>
<evidence type="ECO:0000255" key="1">
    <source>
        <dbReference type="HAMAP-Rule" id="MF_00017"/>
    </source>
</evidence>
<feature type="chain" id="PRO_0000190268" description="Recombination protein RecR">
    <location>
        <begin position="1"/>
        <end position="201"/>
    </location>
</feature>
<feature type="domain" description="Toprim" evidence="1">
    <location>
        <begin position="83"/>
        <end position="178"/>
    </location>
</feature>
<feature type="zinc finger region" description="C4-type" evidence="1">
    <location>
        <begin position="60"/>
        <end position="75"/>
    </location>
</feature>
<sequence>MAKRVTGPEIEKLIQLLAKVPGLGPRSARRAALHLIKKKEQLLGPLGHAMGEAYDKVKICSCCGNVDTIDPCTVCADDRRDQSVIIVVEDVSDLWALERAGAMNTAYHVLGGTLSPLDGVGPEDLNIKGLIDRVSAGGIRELIIAVNATVEGQATAHYITDRLSGLGIKITRLAHGVPVGGELDYLDEGTLTAALRARTTI</sequence>
<gene>
    <name evidence="1" type="primary">recR</name>
    <name type="ordered locus">Atu0093</name>
    <name type="ORF">AGR_C_142</name>
</gene>
<name>RECR_AGRFC</name>
<keyword id="KW-0227">DNA damage</keyword>
<keyword id="KW-0233">DNA recombination</keyword>
<keyword id="KW-0234">DNA repair</keyword>
<keyword id="KW-0479">Metal-binding</keyword>
<keyword id="KW-1185">Reference proteome</keyword>
<keyword id="KW-0862">Zinc</keyword>
<keyword id="KW-0863">Zinc-finger</keyword>
<protein>
    <recommendedName>
        <fullName evidence="1">Recombination protein RecR</fullName>
    </recommendedName>
</protein>
<dbReference type="EMBL" id="AE007869">
    <property type="protein sequence ID" value="AAK85913.1"/>
    <property type="molecule type" value="Genomic_DNA"/>
</dbReference>
<dbReference type="PIR" id="AH2587">
    <property type="entry name" value="AH2587"/>
</dbReference>
<dbReference type="PIR" id="H97369">
    <property type="entry name" value="H97369"/>
</dbReference>
<dbReference type="RefSeq" id="NP_353128.1">
    <property type="nucleotide sequence ID" value="NC_003062.2"/>
</dbReference>
<dbReference type="RefSeq" id="WP_006309918.1">
    <property type="nucleotide sequence ID" value="NC_003062.2"/>
</dbReference>
<dbReference type="SMR" id="Q8UJ45"/>
<dbReference type="STRING" id="176299.Atu0093"/>
<dbReference type="EnsemblBacteria" id="AAK85913">
    <property type="protein sequence ID" value="AAK85913"/>
    <property type="gene ID" value="Atu0093"/>
</dbReference>
<dbReference type="GeneID" id="1132131"/>
<dbReference type="KEGG" id="atu:Atu0093"/>
<dbReference type="PATRIC" id="fig|176299.10.peg.86"/>
<dbReference type="eggNOG" id="COG0353">
    <property type="taxonomic scope" value="Bacteria"/>
</dbReference>
<dbReference type="HOGENOM" id="CLU_060739_1_1_5"/>
<dbReference type="OrthoDB" id="9802672at2"/>
<dbReference type="PhylomeDB" id="Q8UJ45"/>
<dbReference type="BioCyc" id="AGRO:ATU0093-MONOMER"/>
<dbReference type="Proteomes" id="UP000000813">
    <property type="component" value="Chromosome circular"/>
</dbReference>
<dbReference type="GO" id="GO:0003677">
    <property type="term" value="F:DNA binding"/>
    <property type="evidence" value="ECO:0007669"/>
    <property type="project" value="UniProtKB-UniRule"/>
</dbReference>
<dbReference type="GO" id="GO:0008270">
    <property type="term" value="F:zinc ion binding"/>
    <property type="evidence" value="ECO:0007669"/>
    <property type="project" value="UniProtKB-KW"/>
</dbReference>
<dbReference type="GO" id="GO:0006310">
    <property type="term" value="P:DNA recombination"/>
    <property type="evidence" value="ECO:0007669"/>
    <property type="project" value="UniProtKB-UniRule"/>
</dbReference>
<dbReference type="GO" id="GO:0006281">
    <property type="term" value="P:DNA repair"/>
    <property type="evidence" value="ECO:0007669"/>
    <property type="project" value="UniProtKB-UniRule"/>
</dbReference>
<dbReference type="CDD" id="cd01025">
    <property type="entry name" value="TOPRIM_recR"/>
    <property type="match status" value="1"/>
</dbReference>
<dbReference type="Gene3D" id="3.40.1360.10">
    <property type="match status" value="1"/>
</dbReference>
<dbReference type="Gene3D" id="6.10.250.240">
    <property type="match status" value="1"/>
</dbReference>
<dbReference type="Gene3D" id="1.10.8.420">
    <property type="entry name" value="RecR Domain 1"/>
    <property type="match status" value="1"/>
</dbReference>
<dbReference type="HAMAP" id="MF_00017">
    <property type="entry name" value="RecR"/>
    <property type="match status" value="1"/>
</dbReference>
<dbReference type="InterPro" id="IPR000093">
    <property type="entry name" value="DNA_Rcmb_RecR"/>
</dbReference>
<dbReference type="InterPro" id="IPR023627">
    <property type="entry name" value="Rcmb_RecR"/>
</dbReference>
<dbReference type="InterPro" id="IPR015967">
    <property type="entry name" value="Rcmb_RecR_Znf"/>
</dbReference>
<dbReference type="InterPro" id="IPR006171">
    <property type="entry name" value="TOPRIM_dom"/>
</dbReference>
<dbReference type="InterPro" id="IPR034137">
    <property type="entry name" value="TOPRIM_RecR"/>
</dbReference>
<dbReference type="NCBIfam" id="TIGR00615">
    <property type="entry name" value="recR"/>
    <property type="match status" value="1"/>
</dbReference>
<dbReference type="PANTHER" id="PTHR30446">
    <property type="entry name" value="RECOMBINATION PROTEIN RECR"/>
    <property type="match status" value="1"/>
</dbReference>
<dbReference type="PANTHER" id="PTHR30446:SF0">
    <property type="entry name" value="RECOMBINATION PROTEIN RECR"/>
    <property type="match status" value="1"/>
</dbReference>
<dbReference type="Pfam" id="PF21175">
    <property type="entry name" value="RecR_C"/>
    <property type="match status" value="1"/>
</dbReference>
<dbReference type="Pfam" id="PF21176">
    <property type="entry name" value="RecR_HhH"/>
    <property type="match status" value="1"/>
</dbReference>
<dbReference type="Pfam" id="PF02132">
    <property type="entry name" value="RecR_ZnF"/>
    <property type="match status" value="1"/>
</dbReference>
<dbReference type="Pfam" id="PF13662">
    <property type="entry name" value="Toprim_4"/>
    <property type="match status" value="1"/>
</dbReference>
<dbReference type="SMART" id="SM00493">
    <property type="entry name" value="TOPRIM"/>
    <property type="match status" value="1"/>
</dbReference>
<dbReference type="SUPFAM" id="SSF111304">
    <property type="entry name" value="Recombination protein RecR"/>
    <property type="match status" value="1"/>
</dbReference>
<dbReference type="PROSITE" id="PS01300">
    <property type="entry name" value="RECR"/>
    <property type="match status" value="1"/>
</dbReference>
<dbReference type="PROSITE" id="PS50880">
    <property type="entry name" value="TOPRIM"/>
    <property type="match status" value="1"/>
</dbReference>
<proteinExistence type="inferred from homology"/>
<reference key="1">
    <citation type="journal article" date="2001" name="Science">
        <title>The genome of the natural genetic engineer Agrobacterium tumefaciens C58.</title>
        <authorList>
            <person name="Wood D.W."/>
            <person name="Setubal J.C."/>
            <person name="Kaul R."/>
            <person name="Monks D.E."/>
            <person name="Kitajima J.P."/>
            <person name="Okura V.K."/>
            <person name="Zhou Y."/>
            <person name="Chen L."/>
            <person name="Wood G.E."/>
            <person name="Almeida N.F. Jr."/>
            <person name="Woo L."/>
            <person name="Chen Y."/>
            <person name="Paulsen I.T."/>
            <person name="Eisen J.A."/>
            <person name="Karp P.D."/>
            <person name="Bovee D. Sr."/>
            <person name="Chapman P."/>
            <person name="Clendenning J."/>
            <person name="Deatherage G."/>
            <person name="Gillet W."/>
            <person name="Grant C."/>
            <person name="Kutyavin T."/>
            <person name="Levy R."/>
            <person name="Li M.-J."/>
            <person name="McClelland E."/>
            <person name="Palmieri A."/>
            <person name="Raymond C."/>
            <person name="Rouse G."/>
            <person name="Saenphimmachak C."/>
            <person name="Wu Z."/>
            <person name="Romero P."/>
            <person name="Gordon D."/>
            <person name="Zhang S."/>
            <person name="Yoo H."/>
            <person name="Tao Y."/>
            <person name="Biddle P."/>
            <person name="Jung M."/>
            <person name="Krespan W."/>
            <person name="Perry M."/>
            <person name="Gordon-Kamm B."/>
            <person name="Liao L."/>
            <person name="Kim S."/>
            <person name="Hendrick C."/>
            <person name="Zhao Z.-Y."/>
            <person name="Dolan M."/>
            <person name="Chumley F."/>
            <person name="Tingey S.V."/>
            <person name="Tomb J.-F."/>
            <person name="Gordon M.P."/>
            <person name="Olson M.V."/>
            <person name="Nester E.W."/>
        </authorList>
    </citation>
    <scope>NUCLEOTIDE SEQUENCE [LARGE SCALE GENOMIC DNA]</scope>
    <source>
        <strain>C58 / ATCC 33970</strain>
    </source>
</reference>
<reference key="2">
    <citation type="journal article" date="2001" name="Science">
        <title>Genome sequence of the plant pathogen and biotechnology agent Agrobacterium tumefaciens C58.</title>
        <authorList>
            <person name="Goodner B."/>
            <person name="Hinkle G."/>
            <person name="Gattung S."/>
            <person name="Miller N."/>
            <person name="Blanchard M."/>
            <person name="Qurollo B."/>
            <person name="Goldman B.S."/>
            <person name="Cao Y."/>
            <person name="Askenazi M."/>
            <person name="Halling C."/>
            <person name="Mullin L."/>
            <person name="Houmiel K."/>
            <person name="Gordon J."/>
            <person name="Vaudin M."/>
            <person name="Iartchouk O."/>
            <person name="Epp A."/>
            <person name="Liu F."/>
            <person name="Wollam C."/>
            <person name="Allinger M."/>
            <person name="Doughty D."/>
            <person name="Scott C."/>
            <person name="Lappas C."/>
            <person name="Markelz B."/>
            <person name="Flanagan C."/>
            <person name="Crowell C."/>
            <person name="Gurson J."/>
            <person name="Lomo C."/>
            <person name="Sear C."/>
            <person name="Strub G."/>
            <person name="Cielo C."/>
            <person name="Slater S."/>
        </authorList>
    </citation>
    <scope>NUCLEOTIDE SEQUENCE [LARGE SCALE GENOMIC DNA]</scope>
    <source>
        <strain>C58 / ATCC 33970</strain>
    </source>
</reference>